<name>PUR9_LEUCK</name>
<organism>
    <name type="scientific">Leuconostoc citreum (strain KM20)</name>
    <dbReference type="NCBI Taxonomy" id="349519"/>
    <lineage>
        <taxon>Bacteria</taxon>
        <taxon>Bacillati</taxon>
        <taxon>Bacillota</taxon>
        <taxon>Bacilli</taxon>
        <taxon>Lactobacillales</taxon>
        <taxon>Lactobacillaceae</taxon>
        <taxon>Leuconostoc</taxon>
    </lineage>
</organism>
<reference key="1">
    <citation type="journal article" date="2008" name="J. Bacteriol.">
        <title>Complete genome sequence of Leuconostoc citreum KM20.</title>
        <authorList>
            <person name="Kim J.F."/>
            <person name="Jeong H."/>
            <person name="Lee J.-S."/>
            <person name="Choi S.-H."/>
            <person name="Ha M."/>
            <person name="Hur C.-G."/>
            <person name="Kim J.-S."/>
            <person name="Lee S."/>
            <person name="Park H.-S."/>
            <person name="Park Y.-H."/>
            <person name="Oh T.K."/>
        </authorList>
    </citation>
    <scope>NUCLEOTIDE SEQUENCE [LARGE SCALE GENOMIC DNA]</scope>
    <source>
        <strain>KM20</strain>
    </source>
</reference>
<gene>
    <name evidence="1" type="primary">purH</name>
    <name type="ordered locus">LCK_00611</name>
</gene>
<feature type="chain" id="PRO_1000096072" description="Bifunctional purine biosynthesis protein PurH">
    <location>
        <begin position="1"/>
        <end position="508"/>
    </location>
</feature>
<feature type="domain" description="MGS-like" evidence="2">
    <location>
        <begin position="1"/>
        <end position="144"/>
    </location>
</feature>
<sequence length="508" mass="55006">MTRALLSVSDKTGLVPFAEKLVALGYELVSTGGTHRVLAAAGLDVIAIDDVTDFPEMLDGRVKTLHPRVHAGLLARRDLPEHMAKMAEFDITPIDMVVVNLYPFKSTIQKDGVTEAEAIENIDIGGPSMLRSAAKNFAGVLPIVDPADYDVVVDKLQSGSIDADYRKSLAAKVFQHTAAYDALIADYLTVAEFPNNLTLPYEKFDDMRYGENPHQKAAAYKTALPEDYSVLNANILHGKQLSYNNIRDADAALRIIAEFEETTVVTVKHMNPAGIGQGSTIETAWDKAFAADDVSIFGGIVALNREVDAATAEKMHAIFLEIIIAPSFTPEAFDILSAKKNLRLLTVPFTTTVPQKLEVTSVLGGVVVQERDLYTESKANFEVVSKVQPTEAQLRAMIFAQKVVKHVKSNAIIVARDGQTLGMGAGQPNRIDSVVYAIQKAAVKSGFDEAVLASDAFFPMDDSVQYAAENGIRAVVEPGGSIKDKDSIAKADELGIALVFSGTRHFKH</sequence>
<protein>
    <recommendedName>
        <fullName evidence="1">Bifunctional purine biosynthesis protein PurH</fullName>
    </recommendedName>
    <domain>
        <recommendedName>
            <fullName evidence="1">Phosphoribosylaminoimidazolecarboxamide formyltransferase</fullName>
            <ecNumber evidence="1">2.1.2.3</ecNumber>
        </recommendedName>
        <alternativeName>
            <fullName evidence="1">AICAR transformylase</fullName>
        </alternativeName>
    </domain>
    <domain>
        <recommendedName>
            <fullName evidence="1">IMP cyclohydrolase</fullName>
            <ecNumber evidence="1">3.5.4.10</ecNumber>
        </recommendedName>
        <alternativeName>
            <fullName evidence="1">ATIC</fullName>
        </alternativeName>
        <alternativeName>
            <fullName evidence="1">IMP synthase</fullName>
        </alternativeName>
        <alternativeName>
            <fullName evidence="1">Inosinicase</fullName>
        </alternativeName>
    </domain>
</protein>
<comment type="catalytic activity">
    <reaction evidence="1">
        <text>(6R)-10-formyltetrahydrofolate + 5-amino-1-(5-phospho-beta-D-ribosyl)imidazole-4-carboxamide = 5-formamido-1-(5-phospho-D-ribosyl)imidazole-4-carboxamide + (6S)-5,6,7,8-tetrahydrofolate</text>
        <dbReference type="Rhea" id="RHEA:22192"/>
        <dbReference type="ChEBI" id="CHEBI:57453"/>
        <dbReference type="ChEBI" id="CHEBI:58467"/>
        <dbReference type="ChEBI" id="CHEBI:58475"/>
        <dbReference type="ChEBI" id="CHEBI:195366"/>
        <dbReference type="EC" id="2.1.2.3"/>
    </reaction>
</comment>
<comment type="catalytic activity">
    <reaction evidence="1">
        <text>IMP + H2O = 5-formamido-1-(5-phospho-D-ribosyl)imidazole-4-carboxamide</text>
        <dbReference type="Rhea" id="RHEA:18445"/>
        <dbReference type="ChEBI" id="CHEBI:15377"/>
        <dbReference type="ChEBI" id="CHEBI:58053"/>
        <dbReference type="ChEBI" id="CHEBI:58467"/>
        <dbReference type="EC" id="3.5.4.10"/>
    </reaction>
</comment>
<comment type="pathway">
    <text evidence="1">Purine metabolism; IMP biosynthesis via de novo pathway; 5-formamido-1-(5-phospho-D-ribosyl)imidazole-4-carboxamide from 5-amino-1-(5-phospho-D-ribosyl)imidazole-4-carboxamide (10-formyl THF route): step 1/1.</text>
</comment>
<comment type="pathway">
    <text evidence="1">Purine metabolism; IMP biosynthesis via de novo pathway; IMP from 5-formamido-1-(5-phospho-D-ribosyl)imidazole-4-carboxamide: step 1/1.</text>
</comment>
<comment type="domain">
    <text evidence="1">The IMP cyclohydrolase activity resides in the N-terminal region.</text>
</comment>
<comment type="similarity">
    <text evidence="1">Belongs to the PurH family.</text>
</comment>
<evidence type="ECO:0000255" key="1">
    <source>
        <dbReference type="HAMAP-Rule" id="MF_00139"/>
    </source>
</evidence>
<evidence type="ECO:0000255" key="2">
    <source>
        <dbReference type="PROSITE-ProRule" id="PRU01202"/>
    </source>
</evidence>
<dbReference type="EC" id="2.1.2.3" evidence="1"/>
<dbReference type="EC" id="3.5.4.10" evidence="1"/>
<dbReference type="EMBL" id="DQ489736">
    <property type="protein sequence ID" value="ACA82444.1"/>
    <property type="molecule type" value="Genomic_DNA"/>
</dbReference>
<dbReference type="RefSeq" id="WP_004908170.1">
    <property type="nucleotide sequence ID" value="NC_010471.1"/>
</dbReference>
<dbReference type="SMR" id="B1MY42"/>
<dbReference type="STRING" id="349519.LCK_00611"/>
<dbReference type="KEGG" id="lci:LCK_00611"/>
<dbReference type="eggNOG" id="COG0138">
    <property type="taxonomic scope" value="Bacteria"/>
</dbReference>
<dbReference type="HOGENOM" id="CLU_016316_5_2_9"/>
<dbReference type="OrthoDB" id="9802065at2"/>
<dbReference type="UniPathway" id="UPA00074">
    <property type="reaction ID" value="UER00133"/>
</dbReference>
<dbReference type="UniPathway" id="UPA00074">
    <property type="reaction ID" value="UER00135"/>
</dbReference>
<dbReference type="Proteomes" id="UP000002166">
    <property type="component" value="Chromosome"/>
</dbReference>
<dbReference type="GO" id="GO:0005829">
    <property type="term" value="C:cytosol"/>
    <property type="evidence" value="ECO:0007669"/>
    <property type="project" value="TreeGrafter"/>
</dbReference>
<dbReference type="GO" id="GO:0003937">
    <property type="term" value="F:IMP cyclohydrolase activity"/>
    <property type="evidence" value="ECO:0007669"/>
    <property type="project" value="UniProtKB-UniRule"/>
</dbReference>
<dbReference type="GO" id="GO:0004643">
    <property type="term" value="F:phosphoribosylaminoimidazolecarboxamide formyltransferase activity"/>
    <property type="evidence" value="ECO:0007669"/>
    <property type="project" value="UniProtKB-UniRule"/>
</dbReference>
<dbReference type="GO" id="GO:0006189">
    <property type="term" value="P:'de novo' IMP biosynthetic process"/>
    <property type="evidence" value="ECO:0007669"/>
    <property type="project" value="UniProtKB-UniRule"/>
</dbReference>
<dbReference type="CDD" id="cd01421">
    <property type="entry name" value="IMPCH"/>
    <property type="match status" value="1"/>
</dbReference>
<dbReference type="FunFam" id="3.40.140.20:FF:000001">
    <property type="entry name" value="Bifunctional purine biosynthesis protein PurH"/>
    <property type="match status" value="1"/>
</dbReference>
<dbReference type="FunFam" id="3.40.140.20:FF:000002">
    <property type="entry name" value="Bifunctional purine biosynthesis protein PurH"/>
    <property type="match status" value="1"/>
</dbReference>
<dbReference type="FunFam" id="3.40.50.1380:FF:000001">
    <property type="entry name" value="Bifunctional purine biosynthesis protein PurH"/>
    <property type="match status" value="1"/>
</dbReference>
<dbReference type="Gene3D" id="3.40.140.20">
    <property type="match status" value="2"/>
</dbReference>
<dbReference type="Gene3D" id="3.40.50.1380">
    <property type="entry name" value="Methylglyoxal synthase-like domain"/>
    <property type="match status" value="1"/>
</dbReference>
<dbReference type="HAMAP" id="MF_00139">
    <property type="entry name" value="PurH"/>
    <property type="match status" value="1"/>
</dbReference>
<dbReference type="InterPro" id="IPR024051">
    <property type="entry name" value="AICAR_Tfase_dup_dom_sf"/>
</dbReference>
<dbReference type="InterPro" id="IPR016193">
    <property type="entry name" value="Cytidine_deaminase-like"/>
</dbReference>
<dbReference type="InterPro" id="IPR011607">
    <property type="entry name" value="MGS-like_dom"/>
</dbReference>
<dbReference type="InterPro" id="IPR036914">
    <property type="entry name" value="MGS-like_dom_sf"/>
</dbReference>
<dbReference type="InterPro" id="IPR002695">
    <property type="entry name" value="PurH-like"/>
</dbReference>
<dbReference type="NCBIfam" id="NF002049">
    <property type="entry name" value="PRK00881.1"/>
    <property type="match status" value="1"/>
</dbReference>
<dbReference type="NCBIfam" id="TIGR00355">
    <property type="entry name" value="purH"/>
    <property type="match status" value="1"/>
</dbReference>
<dbReference type="PANTHER" id="PTHR11692:SF0">
    <property type="entry name" value="BIFUNCTIONAL PURINE BIOSYNTHESIS PROTEIN ATIC"/>
    <property type="match status" value="1"/>
</dbReference>
<dbReference type="PANTHER" id="PTHR11692">
    <property type="entry name" value="BIFUNCTIONAL PURINE BIOSYNTHESIS PROTEIN PURH"/>
    <property type="match status" value="1"/>
</dbReference>
<dbReference type="Pfam" id="PF01808">
    <property type="entry name" value="AICARFT_IMPCHas"/>
    <property type="match status" value="1"/>
</dbReference>
<dbReference type="Pfam" id="PF02142">
    <property type="entry name" value="MGS"/>
    <property type="match status" value="1"/>
</dbReference>
<dbReference type="PIRSF" id="PIRSF000414">
    <property type="entry name" value="AICARFT_IMPCHas"/>
    <property type="match status" value="1"/>
</dbReference>
<dbReference type="SMART" id="SM00798">
    <property type="entry name" value="AICARFT_IMPCHas"/>
    <property type="match status" value="1"/>
</dbReference>
<dbReference type="SMART" id="SM00851">
    <property type="entry name" value="MGS"/>
    <property type="match status" value="1"/>
</dbReference>
<dbReference type="SUPFAM" id="SSF53927">
    <property type="entry name" value="Cytidine deaminase-like"/>
    <property type="match status" value="1"/>
</dbReference>
<dbReference type="SUPFAM" id="SSF52335">
    <property type="entry name" value="Methylglyoxal synthase-like"/>
    <property type="match status" value="1"/>
</dbReference>
<dbReference type="PROSITE" id="PS51855">
    <property type="entry name" value="MGS"/>
    <property type="match status" value="1"/>
</dbReference>
<proteinExistence type="inferred from homology"/>
<accession>B1MY42</accession>
<keyword id="KW-0378">Hydrolase</keyword>
<keyword id="KW-0511">Multifunctional enzyme</keyword>
<keyword id="KW-0658">Purine biosynthesis</keyword>
<keyword id="KW-1185">Reference proteome</keyword>
<keyword id="KW-0808">Transferase</keyword>